<protein>
    <recommendedName>
        <fullName>Protein DOP1 homolog</fullName>
    </recommendedName>
</protein>
<comment type="function">
    <text evidence="1">May be involved in protein traffic between late Golgi and early endosomes.</text>
</comment>
<comment type="subcellular location">
    <subcellularLocation>
        <location evidence="1">Golgi apparatus membrane</location>
        <topology evidence="1">Peripheral membrane protein</topology>
    </subcellularLocation>
</comment>
<comment type="similarity">
    <text evidence="3">Belongs to the DOP1 family.</text>
</comment>
<proteinExistence type="inferred from homology"/>
<organism>
    <name type="scientific">Drosophila pseudoobscura pseudoobscura</name>
    <name type="common">Fruit fly</name>
    <dbReference type="NCBI Taxonomy" id="46245"/>
    <lineage>
        <taxon>Eukaryota</taxon>
        <taxon>Metazoa</taxon>
        <taxon>Ecdysozoa</taxon>
        <taxon>Arthropoda</taxon>
        <taxon>Hexapoda</taxon>
        <taxon>Insecta</taxon>
        <taxon>Pterygota</taxon>
        <taxon>Neoptera</taxon>
        <taxon>Endopterygota</taxon>
        <taxon>Diptera</taxon>
        <taxon>Brachycera</taxon>
        <taxon>Muscomorpha</taxon>
        <taxon>Ephydroidea</taxon>
        <taxon>Drosophilidae</taxon>
        <taxon>Drosophila</taxon>
        <taxon>Sophophora</taxon>
    </lineage>
</organism>
<sequence length="2629" mass="293713">MESADALMEEQKLMAEAKYRNYMTNIDKALRNFEYSSEWADLISALGKLSKAISSNTQYQVIPRRLKIAKRLAQCMHPALPSGVHLKALETYSVIFSKTGPERLATEFIYSAGLFPLLGYAAMNVRPALLAIYETYFVPLGDKLRPALSGFLNGVLPGYDCGLDHFERISALLKQVCNAVNPMHFYTVLWESVANNAAIRLPAITYLLEHFNKRLDMQEQIYVMGHNREIMMSALCACLNDSLILVQRNTLEFLLLGFPMHTALLAEDDLVKLVTNGLNTILRRDMSLNRRLFSWLLGSEVAKNSPTYDTLSLDASATPLDEPPEPYFVKHSRHILIRALITTLRLSLECAPMDLKPYRIMLSLLDKAEIGSAVLDYVLHDIIRAMYISSGNPEALKSANLLFATFDPAYIWSYMTNMFERACHQANSSDKQDKLLPQASAEGGDKFACEVGSGDPCVLEICVLTEFLLETVSLEMYTETTRVYLPKVFLAITQLLSLHMDRVTSSEITASLKLCMKIVSRVQPMITSPIKLNKLMEQQCAGSSSDEKITVNAAAAIDSANKGVPGTHTQGSSLEKSKSDSRLNQFAENSLQSADPNDEDLIRRSASNQSVGRQSPSKKKAKSISRLSELDKDISASDTGQQSSSDLDTPRSIKKLKAKAKVPFIRSPKKQRPKDIVLVQSAAVVDSAGNVHDAEEPKSAPPDPQSPQFYLDDESQATQQRGYSILEKCIRQYEIFFEVYVARKLLQIESDGMSESSVKVQLQRSTSIHSSSHTSSLFLVEQVLEYECPIRESQIERLFNLLRVDKVPRSKQLQRLLNHSLPLLASASELSSDSEATEAPERQTQSLLIDTQTQRGVQQLAELQLSLSMRGAVKLAASLLVEMSTFPNCNKHIVLDRSEPELPNWLKVLCLVACFAQSDKELQVSAITTLFDLISLLRSQIEHTTSPGVTFVVMLPLLKFGHVSYMEQQTRVFQLVSSILWDYLGASCTDPAQTVALLHQLHSCLESGLVETVIGNRMQAQHLLQIQPIPGVGRTALRSFQLERLGDAQLLCPTESTERLRESQARSFKKFELLWHLGRDKQTSRGFEKTLLKVLDTLALPHYMSERTFVTNWLQASLLRGDLARLTKPLYKILLSANSKRVGIVHMQQLYRESAEAEGDTAPAFERDVYAISSEQGNVKYHHMETTSGAKKKSPIRNLPKKIFGVTLSGGKTNKTSNFVSDKTALATEAAQDVNTIGLIINPLENATDFDDETDLEEPRIEIPHKETPLEQKLACAMDESDQPSAQEQPPPPSQQQQDQSSHFDQDITDNSDSSDFESDSELRETSLEKEDSITVSSSAGVSDDVKRFVGDCERVTEALTQHEKIKSRKTYRLTREKTPGENSLNSVATDQTEHSLADMHADALPADEYFREDKKLGKRKKLLTSSDKKRLSCISKTSTDSNLSNSCSQAEPAPEGDPQGEEEATAATDSTINVEDKRRNLSLETSKLQPDWQKALEKGKQNVEILRQNAAAAAAAEEQTSLRSSMKSSSSLADAAHLYHNHLLLYLAIYDTRQTLYALQTLRNIICCDKRTFLCLSITTSFSSASLKQLLVRHRKSISGKGFDGSVGNSEYAQGYRGCMQLELLVTLCLFYARGYFQRESLDAQRQSPTLQDIVNNRRIQLESIELLTLICSELIEIVKGMGRGLACYIADLLARAKLQKVMLHCLNSSVCSYGRRAPTGSYAEQVLSFNDPQDDQLHADCFQLQLLRLLLSVIRLEHEVHQLRQDTPPAAGDDSTGNTSPTRLAEGAAANVKYLPNCLISQQPMFLAAVLGALQQERLRHLHRNWTDLVTSSLNCFTFGSLTNIVISVVHQLCNNLDRMARLGLQQQRHFPPDYVLSQLEALTILCHYCLLDNTQQTALSHLFNQAYPQTSSSAQSSSTSQLLNSFVHSFLSANESSTGTSAPAPRNPQLQAARNAVLSHLPRIMSSVAAIWDSELGQLRPVRQQLMEFLSPVSLHHGCNFLAAVAVTWQQRGSSNASNGSGLSISDQFQRNSTLQACPGQLSLVSLVSSIRVMPMDSFVMTLHQVVRSPPPIHRPPAHLSIEVSALELFYFYMKSAPGTQLADAWSSLLALIRDGLNLSPPAQFALLMLLNEFVQRCPQMPFQDKKEVRELHDVTSRLVDSLSGVAGSCLEQTTWLRRNLAVKEDTDGLAKDNSIGGGGGIQQYSLQAQSVLATILSNLLDVAYGSQEKDKVVNIVTPLLYNITPYLKNHTARNVPFFYACSALLASLSGYQYTRKAWRKDMLDLLLDNSFFQMHISCLPFWRMIMDSLMTYDNTTFRELMTRVSLSQAGSLNIFTSREQEFEQRGMLLKRLAFVIYCSEFDQHNKYMPDIQEQLANSLRLVPMGPSVQAAVFLCFRVLLLRMSPDHVTSLWPIIIAEMVQVFLQMEQELKSESEERSQQMRLPSSIDVSWSNNSGASNGINAQTPMQHWRSVQLEACKLLELGCVLPATKLPHFQMYRWAFVGTEFDVHEEEVGLPNGSLENLATLPTALYVPHVRRVARLMDMKYTSQSPLLQRPSNRHLMLNFQQLQSLQELYAFFSTLGISCPQPRNFADTERDVANCLEEIEDVLANDFLEKLPSLTTPR</sequence>
<feature type="chain" id="PRO_0000297954" description="Protein DOP1 homolog">
    <location>
        <begin position="1"/>
        <end position="2629"/>
    </location>
</feature>
<feature type="region of interest" description="Disordered" evidence="2">
    <location>
        <begin position="561"/>
        <end position="584"/>
    </location>
</feature>
<feature type="region of interest" description="Disordered" evidence="2">
    <location>
        <begin position="605"/>
        <end position="652"/>
    </location>
</feature>
<feature type="region of interest" description="Disordered" evidence="2">
    <location>
        <begin position="688"/>
        <end position="710"/>
    </location>
</feature>
<feature type="region of interest" description="Disordered" evidence="2">
    <location>
        <begin position="1278"/>
        <end position="1340"/>
    </location>
</feature>
<feature type="region of interest" description="Disordered" evidence="2">
    <location>
        <begin position="1371"/>
        <end position="1395"/>
    </location>
</feature>
<feature type="region of interest" description="Disordered" evidence="2">
    <location>
        <begin position="1435"/>
        <end position="1471"/>
    </location>
</feature>
<feature type="region of interest" description="Disordered" evidence="2">
    <location>
        <begin position="1766"/>
        <end position="1785"/>
    </location>
</feature>
<feature type="compositionally biased region" description="Polar residues" evidence="2">
    <location>
        <begin position="605"/>
        <end position="615"/>
    </location>
</feature>
<feature type="compositionally biased region" description="Polar residues" evidence="2">
    <location>
        <begin position="636"/>
        <end position="647"/>
    </location>
</feature>
<feature type="compositionally biased region" description="Acidic residues" evidence="2">
    <location>
        <begin position="1307"/>
        <end position="1320"/>
    </location>
</feature>
<feature type="compositionally biased region" description="Basic and acidic residues" evidence="2">
    <location>
        <begin position="1321"/>
        <end position="1333"/>
    </location>
</feature>
<feature type="compositionally biased region" description="Polar residues" evidence="2">
    <location>
        <begin position="1381"/>
        <end position="1391"/>
    </location>
</feature>
<feature type="compositionally biased region" description="Polar residues" evidence="2">
    <location>
        <begin position="1435"/>
        <end position="1450"/>
    </location>
</feature>
<gene>
    <name type="ORF">GA13490</name>
</gene>
<reference key="1">
    <citation type="journal article" date="2005" name="Genome Res.">
        <title>Comparative genome sequencing of Drosophila pseudoobscura: chromosomal, gene, and cis-element evolution.</title>
        <authorList>
            <person name="Richards S."/>
            <person name="Liu Y."/>
            <person name="Bettencourt B.R."/>
            <person name="Hradecky P."/>
            <person name="Letovsky S."/>
            <person name="Nielsen R."/>
            <person name="Thornton K."/>
            <person name="Hubisz M.J."/>
            <person name="Chen R."/>
            <person name="Meisel R.P."/>
            <person name="Couronne O."/>
            <person name="Hua S."/>
            <person name="Smith M.A."/>
            <person name="Zhang P."/>
            <person name="Liu J."/>
            <person name="Bussemaker H.J."/>
            <person name="van Batenburg M.F."/>
            <person name="Howells S.L."/>
            <person name="Scherer S.E."/>
            <person name="Sodergren E."/>
            <person name="Matthews B.B."/>
            <person name="Crosby M.A."/>
            <person name="Schroeder A.J."/>
            <person name="Ortiz-Barrientos D."/>
            <person name="Rives C.M."/>
            <person name="Metzker M.L."/>
            <person name="Muzny D.M."/>
            <person name="Scott G."/>
            <person name="Steffen D."/>
            <person name="Wheeler D.A."/>
            <person name="Worley K.C."/>
            <person name="Havlak P."/>
            <person name="Durbin K.J."/>
            <person name="Egan A."/>
            <person name="Gill R."/>
            <person name="Hume J."/>
            <person name="Morgan M.B."/>
            <person name="Miner G."/>
            <person name="Hamilton C."/>
            <person name="Huang Y."/>
            <person name="Waldron L."/>
            <person name="Verduzco D."/>
            <person name="Clerc-Blankenburg K.P."/>
            <person name="Dubchak I."/>
            <person name="Noor M.A.F."/>
            <person name="Anderson W."/>
            <person name="White K.P."/>
            <person name="Clark A.G."/>
            <person name="Schaeffer S.W."/>
            <person name="Gelbart W.M."/>
            <person name="Weinstock G.M."/>
            <person name="Gibbs R.A."/>
        </authorList>
    </citation>
    <scope>NUCLEOTIDE SEQUENCE [LARGE SCALE GENOMIC DNA]</scope>
    <source>
        <strain>MV2-25 / Tucson 14011-0121.94</strain>
    </source>
</reference>
<accession>Q292H2</accession>
<name>DOP1_DROPS</name>
<keyword id="KW-0333">Golgi apparatus</keyword>
<keyword id="KW-0472">Membrane</keyword>
<keyword id="KW-0653">Protein transport</keyword>
<keyword id="KW-1185">Reference proteome</keyword>
<keyword id="KW-0813">Transport</keyword>
<dbReference type="EMBL" id="CM000071">
    <property type="protein sequence ID" value="EAL24890.1"/>
    <property type="molecule type" value="Genomic_DNA"/>
</dbReference>
<dbReference type="FunCoup" id="Q292H2">
    <property type="interactions" value="1167"/>
</dbReference>
<dbReference type="IntAct" id="Q292H2">
    <property type="interactions" value="1"/>
</dbReference>
<dbReference type="STRING" id="46245.Q292H2"/>
<dbReference type="eggNOG" id="KOG3613">
    <property type="taxonomic scope" value="Eukaryota"/>
</dbReference>
<dbReference type="HOGENOM" id="CLU_001045_0_0_1"/>
<dbReference type="InParanoid" id="Q292H2"/>
<dbReference type="OMA" id="LHHGCNF"/>
<dbReference type="PhylomeDB" id="Q292H2"/>
<dbReference type="Proteomes" id="UP000001819">
    <property type="component" value="Unplaced"/>
</dbReference>
<dbReference type="GO" id="GO:0005829">
    <property type="term" value="C:cytosol"/>
    <property type="evidence" value="ECO:0007669"/>
    <property type="project" value="GOC"/>
</dbReference>
<dbReference type="GO" id="GO:0005768">
    <property type="term" value="C:endosome"/>
    <property type="evidence" value="ECO:0007669"/>
    <property type="project" value="TreeGrafter"/>
</dbReference>
<dbReference type="GO" id="GO:0000139">
    <property type="term" value="C:Golgi membrane"/>
    <property type="evidence" value="ECO:0007669"/>
    <property type="project" value="UniProtKB-SubCell"/>
</dbReference>
<dbReference type="GO" id="GO:0005802">
    <property type="term" value="C:trans-Golgi network"/>
    <property type="evidence" value="ECO:0007669"/>
    <property type="project" value="TreeGrafter"/>
</dbReference>
<dbReference type="GO" id="GO:0006895">
    <property type="term" value="P:Golgi to endosome transport"/>
    <property type="evidence" value="ECO:0007669"/>
    <property type="project" value="InterPro"/>
</dbReference>
<dbReference type="GO" id="GO:0015031">
    <property type="term" value="P:protein transport"/>
    <property type="evidence" value="ECO:0007669"/>
    <property type="project" value="UniProtKB-KW"/>
</dbReference>
<dbReference type="InterPro" id="IPR040314">
    <property type="entry name" value="DOP1"/>
</dbReference>
<dbReference type="InterPro" id="IPR056457">
    <property type="entry name" value="DOP1_C"/>
</dbReference>
<dbReference type="InterPro" id="IPR007249">
    <property type="entry name" value="DOP1_N"/>
</dbReference>
<dbReference type="InterPro" id="IPR056459">
    <property type="entry name" value="TPR_DOP1"/>
</dbReference>
<dbReference type="InterPro" id="IPR056458">
    <property type="entry name" value="TPR_DOP1_M"/>
</dbReference>
<dbReference type="PANTHER" id="PTHR14042">
    <property type="entry name" value="DOPEY-RELATED"/>
    <property type="match status" value="1"/>
</dbReference>
<dbReference type="PANTHER" id="PTHR14042:SF24">
    <property type="entry name" value="PROTEIN DOPEY-1 HOMOLOG"/>
    <property type="match status" value="1"/>
</dbReference>
<dbReference type="Pfam" id="PF24598">
    <property type="entry name" value="DOP1_C"/>
    <property type="match status" value="1"/>
</dbReference>
<dbReference type="Pfam" id="PF04118">
    <property type="entry name" value="Dopey_N"/>
    <property type="match status" value="1"/>
</dbReference>
<dbReference type="Pfam" id="PF24601">
    <property type="entry name" value="TPR_DOP1"/>
    <property type="match status" value="1"/>
</dbReference>
<dbReference type="Pfam" id="PF24597">
    <property type="entry name" value="TPR_DOP1_M"/>
    <property type="match status" value="1"/>
</dbReference>
<evidence type="ECO:0000250" key="1">
    <source>
        <dbReference type="UniProtKB" id="Q03921"/>
    </source>
</evidence>
<evidence type="ECO:0000256" key="2">
    <source>
        <dbReference type="SAM" id="MobiDB-lite"/>
    </source>
</evidence>
<evidence type="ECO:0000305" key="3"/>